<organism>
    <name type="scientific">Bacillus anthracis (strain CDC 684 / NRRL 3495)</name>
    <dbReference type="NCBI Taxonomy" id="568206"/>
    <lineage>
        <taxon>Bacteria</taxon>
        <taxon>Bacillati</taxon>
        <taxon>Bacillota</taxon>
        <taxon>Bacilli</taxon>
        <taxon>Bacillales</taxon>
        <taxon>Bacillaceae</taxon>
        <taxon>Bacillus</taxon>
        <taxon>Bacillus cereus group</taxon>
    </lineage>
</organism>
<accession>C3LJ69</accession>
<comment type="function">
    <text evidence="1">Forms part of the ribosomal stalk which helps the ribosome interact with GTP-bound translation factors.</text>
</comment>
<comment type="subunit">
    <text evidence="1">Part of the ribosomal stalk of the 50S ribosomal subunit. Interacts with L10 and the large rRNA to form the base of the stalk. L10 forms an elongated spine to which L12 dimers bind in a sequential fashion forming a multimeric L10(L12)X complex.</text>
</comment>
<comment type="PTM">
    <text evidence="1">One or more lysine residues are methylated.</text>
</comment>
<comment type="similarity">
    <text evidence="1">Belongs to the universal ribosomal protein uL11 family.</text>
</comment>
<feature type="chain" id="PRO_1000195582" description="Large ribosomal subunit protein uL11">
    <location>
        <begin position="1"/>
        <end position="141"/>
    </location>
</feature>
<proteinExistence type="inferred from homology"/>
<evidence type="ECO:0000255" key="1">
    <source>
        <dbReference type="HAMAP-Rule" id="MF_00736"/>
    </source>
</evidence>
<evidence type="ECO:0000305" key="2"/>
<reference key="1">
    <citation type="submission" date="2008-10" db="EMBL/GenBank/DDBJ databases">
        <title>Genome sequence of Bacillus anthracis str. CDC 684.</title>
        <authorList>
            <person name="Dodson R.J."/>
            <person name="Munk A.C."/>
            <person name="Brettin T."/>
            <person name="Bruce D."/>
            <person name="Detter C."/>
            <person name="Tapia R."/>
            <person name="Han C."/>
            <person name="Sutton G."/>
            <person name="Sims D."/>
        </authorList>
    </citation>
    <scope>NUCLEOTIDE SEQUENCE [LARGE SCALE GENOMIC DNA]</scope>
    <source>
        <strain>CDC 684 / NRRL 3495</strain>
    </source>
</reference>
<name>RL11_BACAC</name>
<gene>
    <name evidence="1" type="primary">rplK</name>
    <name type="ordered locus">BAMEG_0112</name>
</gene>
<keyword id="KW-0488">Methylation</keyword>
<keyword id="KW-0687">Ribonucleoprotein</keyword>
<keyword id="KW-0689">Ribosomal protein</keyword>
<keyword id="KW-0694">RNA-binding</keyword>
<keyword id="KW-0699">rRNA-binding</keyword>
<sequence>MAKKVIKMVKLQIPAGKANPAPPVGPALGQAGVNIMGFCKEFNARTADQAGLIIPVEITVFEDRSFTFITKTPPAAVLLKKVAGIESGSGEPNRNKVATVKRDKVREIAETKMPDLNAASVEAAMRMVEGTARSMGIVIED</sequence>
<dbReference type="EMBL" id="CP001215">
    <property type="protein sequence ID" value="ACP13317.1"/>
    <property type="molecule type" value="Genomic_DNA"/>
</dbReference>
<dbReference type="RefSeq" id="WP_001085872.1">
    <property type="nucleotide sequence ID" value="NC_012581.1"/>
</dbReference>
<dbReference type="SMR" id="C3LJ69"/>
<dbReference type="GeneID" id="93010956"/>
<dbReference type="KEGG" id="bah:BAMEG_0112"/>
<dbReference type="HOGENOM" id="CLU_074237_2_1_9"/>
<dbReference type="GO" id="GO:0022625">
    <property type="term" value="C:cytosolic large ribosomal subunit"/>
    <property type="evidence" value="ECO:0007669"/>
    <property type="project" value="TreeGrafter"/>
</dbReference>
<dbReference type="GO" id="GO:0070180">
    <property type="term" value="F:large ribosomal subunit rRNA binding"/>
    <property type="evidence" value="ECO:0007669"/>
    <property type="project" value="UniProtKB-UniRule"/>
</dbReference>
<dbReference type="GO" id="GO:0003735">
    <property type="term" value="F:structural constituent of ribosome"/>
    <property type="evidence" value="ECO:0007669"/>
    <property type="project" value="InterPro"/>
</dbReference>
<dbReference type="GO" id="GO:0006412">
    <property type="term" value="P:translation"/>
    <property type="evidence" value="ECO:0007669"/>
    <property type="project" value="UniProtKB-UniRule"/>
</dbReference>
<dbReference type="CDD" id="cd00349">
    <property type="entry name" value="Ribosomal_L11"/>
    <property type="match status" value="1"/>
</dbReference>
<dbReference type="FunFam" id="1.10.10.250:FF:000001">
    <property type="entry name" value="50S ribosomal protein L11"/>
    <property type="match status" value="1"/>
</dbReference>
<dbReference type="FunFam" id="3.30.1550.10:FF:000001">
    <property type="entry name" value="50S ribosomal protein L11"/>
    <property type="match status" value="1"/>
</dbReference>
<dbReference type="Gene3D" id="1.10.10.250">
    <property type="entry name" value="Ribosomal protein L11, C-terminal domain"/>
    <property type="match status" value="1"/>
</dbReference>
<dbReference type="Gene3D" id="3.30.1550.10">
    <property type="entry name" value="Ribosomal protein L11/L12, N-terminal domain"/>
    <property type="match status" value="1"/>
</dbReference>
<dbReference type="HAMAP" id="MF_00736">
    <property type="entry name" value="Ribosomal_uL11"/>
    <property type="match status" value="1"/>
</dbReference>
<dbReference type="InterPro" id="IPR000911">
    <property type="entry name" value="Ribosomal_uL11"/>
</dbReference>
<dbReference type="InterPro" id="IPR006519">
    <property type="entry name" value="Ribosomal_uL11_bac-typ"/>
</dbReference>
<dbReference type="InterPro" id="IPR020783">
    <property type="entry name" value="Ribosomal_uL11_C"/>
</dbReference>
<dbReference type="InterPro" id="IPR036769">
    <property type="entry name" value="Ribosomal_uL11_C_sf"/>
</dbReference>
<dbReference type="InterPro" id="IPR020785">
    <property type="entry name" value="Ribosomal_uL11_CS"/>
</dbReference>
<dbReference type="InterPro" id="IPR020784">
    <property type="entry name" value="Ribosomal_uL11_N"/>
</dbReference>
<dbReference type="InterPro" id="IPR036796">
    <property type="entry name" value="Ribosomal_uL11_N_sf"/>
</dbReference>
<dbReference type="NCBIfam" id="TIGR01632">
    <property type="entry name" value="L11_bact"/>
    <property type="match status" value="1"/>
</dbReference>
<dbReference type="PANTHER" id="PTHR11661">
    <property type="entry name" value="60S RIBOSOMAL PROTEIN L12"/>
    <property type="match status" value="1"/>
</dbReference>
<dbReference type="PANTHER" id="PTHR11661:SF1">
    <property type="entry name" value="LARGE RIBOSOMAL SUBUNIT PROTEIN UL11M"/>
    <property type="match status" value="1"/>
</dbReference>
<dbReference type="Pfam" id="PF00298">
    <property type="entry name" value="Ribosomal_L11"/>
    <property type="match status" value="1"/>
</dbReference>
<dbReference type="Pfam" id="PF03946">
    <property type="entry name" value="Ribosomal_L11_N"/>
    <property type="match status" value="1"/>
</dbReference>
<dbReference type="SMART" id="SM00649">
    <property type="entry name" value="RL11"/>
    <property type="match status" value="1"/>
</dbReference>
<dbReference type="SUPFAM" id="SSF54747">
    <property type="entry name" value="Ribosomal L11/L12e N-terminal domain"/>
    <property type="match status" value="1"/>
</dbReference>
<dbReference type="SUPFAM" id="SSF46906">
    <property type="entry name" value="Ribosomal protein L11, C-terminal domain"/>
    <property type="match status" value="1"/>
</dbReference>
<dbReference type="PROSITE" id="PS00359">
    <property type="entry name" value="RIBOSOMAL_L11"/>
    <property type="match status" value="1"/>
</dbReference>
<protein>
    <recommendedName>
        <fullName evidence="1">Large ribosomal subunit protein uL11</fullName>
    </recommendedName>
    <alternativeName>
        <fullName evidence="2">50S ribosomal protein L11</fullName>
    </alternativeName>
</protein>